<accession>A5IW62</accession>
<dbReference type="EC" id="3.5.3.6" evidence="1"/>
<dbReference type="EMBL" id="CP000703">
    <property type="protein sequence ID" value="ABQ50435.1"/>
    <property type="molecule type" value="Genomic_DNA"/>
</dbReference>
<dbReference type="RefSeq" id="WP_000129417.1">
    <property type="nucleotide sequence ID" value="NC_009487.1"/>
</dbReference>
<dbReference type="SMR" id="A5IW62"/>
<dbReference type="KEGG" id="saj:SaurJH9_2659"/>
<dbReference type="HOGENOM" id="CLU_052662_0_1_9"/>
<dbReference type="UniPathway" id="UPA00254">
    <property type="reaction ID" value="UER00364"/>
</dbReference>
<dbReference type="GO" id="GO:0005737">
    <property type="term" value="C:cytoplasm"/>
    <property type="evidence" value="ECO:0007669"/>
    <property type="project" value="UniProtKB-SubCell"/>
</dbReference>
<dbReference type="GO" id="GO:0016990">
    <property type="term" value="F:arginine deiminase activity"/>
    <property type="evidence" value="ECO:0007669"/>
    <property type="project" value="UniProtKB-UniRule"/>
</dbReference>
<dbReference type="GO" id="GO:0019547">
    <property type="term" value="P:arginine catabolic process to ornithine"/>
    <property type="evidence" value="ECO:0007669"/>
    <property type="project" value="UniProtKB-UniRule"/>
</dbReference>
<dbReference type="GO" id="GO:0019546">
    <property type="term" value="P:arginine deiminase pathway"/>
    <property type="evidence" value="ECO:0007669"/>
    <property type="project" value="TreeGrafter"/>
</dbReference>
<dbReference type="FunFam" id="1.10.3930.10:FF:000001">
    <property type="entry name" value="Arginine deiminase"/>
    <property type="match status" value="1"/>
</dbReference>
<dbReference type="Gene3D" id="1.10.3930.10">
    <property type="entry name" value="Arginine deiminase"/>
    <property type="match status" value="1"/>
</dbReference>
<dbReference type="Gene3D" id="3.75.10.10">
    <property type="entry name" value="L-arginine/glycine Amidinotransferase, Chain A"/>
    <property type="match status" value="1"/>
</dbReference>
<dbReference type="HAMAP" id="MF_00242">
    <property type="entry name" value="Arg_deiminase"/>
    <property type="match status" value="1"/>
</dbReference>
<dbReference type="InterPro" id="IPR003876">
    <property type="entry name" value="Arg_deiminase"/>
</dbReference>
<dbReference type="NCBIfam" id="TIGR01078">
    <property type="entry name" value="arcA"/>
    <property type="match status" value="1"/>
</dbReference>
<dbReference type="NCBIfam" id="NF002381">
    <property type="entry name" value="PRK01388.1"/>
    <property type="match status" value="1"/>
</dbReference>
<dbReference type="PANTHER" id="PTHR47271">
    <property type="entry name" value="ARGININE DEIMINASE"/>
    <property type="match status" value="1"/>
</dbReference>
<dbReference type="PANTHER" id="PTHR47271:SF2">
    <property type="entry name" value="ARGININE DEIMINASE"/>
    <property type="match status" value="1"/>
</dbReference>
<dbReference type="Pfam" id="PF02274">
    <property type="entry name" value="ADI"/>
    <property type="match status" value="1"/>
</dbReference>
<dbReference type="PIRSF" id="PIRSF006356">
    <property type="entry name" value="Arg_deiminase"/>
    <property type="match status" value="1"/>
</dbReference>
<dbReference type="PRINTS" id="PR01466">
    <property type="entry name" value="ARGDEIMINASE"/>
</dbReference>
<dbReference type="SUPFAM" id="SSF55909">
    <property type="entry name" value="Pentein"/>
    <property type="match status" value="1"/>
</dbReference>
<evidence type="ECO:0000255" key="1">
    <source>
        <dbReference type="HAMAP-Rule" id="MF_00242"/>
    </source>
</evidence>
<gene>
    <name evidence="1" type="primary">arcA</name>
    <name type="ordered locus">SaurJH9_2659</name>
</gene>
<comment type="catalytic activity">
    <reaction evidence="1">
        <text>L-arginine + H2O = L-citrulline + NH4(+)</text>
        <dbReference type="Rhea" id="RHEA:19597"/>
        <dbReference type="ChEBI" id="CHEBI:15377"/>
        <dbReference type="ChEBI" id="CHEBI:28938"/>
        <dbReference type="ChEBI" id="CHEBI:32682"/>
        <dbReference type="ChEBI" id="CHEBI:57743"/>
        <dbReference type="EC" id="3.5.3.6"/>
    </reaction>
</comment>
<comment type="pathway">
    <text evidence="1">Amino-acid degradation; L-arginine degradation via ADI pathway; carbamoyl phosphate from L-arginine: step 1/2.</text>
</comment>
<comment type="subcellular location">
    <subcellularLocation>
        <location evidence="1">Cytoplasm</location>
    </subcellularLocation>
</comment>
<comment type="similarity">
    <text evidence="1">Belongs to the arginine deiminase family.</text>
</comment>
<feature type="chain" id="PRO_1000078367" description="Arginine deiminase">
    <location>
        <begin position="1"/>
        <end position="411"/>
    </location>
</feature>
<feature type="active site" description="Amidino-cysteine intermediate" evidence="1">
    <location>
        <position position="401"/>
    </location>
</feature>
<reference key="1">
    <citation type="submission" date="2007-05" db="EMBL/GenBank/DDBJ databases">
        <title>Complete sequence of chromosome of Staphylococcus aureus subsp. aureus JH9.</title>
        <authorList>
            <consortium name="US DOE Joint Genome Institute"/>
            <person name="Copeland A."/>
            <person name="Lucas S."/>
            <person name="Lapidus A."/>
            <person name="Barry K."/>
            <person name="Detter J.C."/>
            <person name="Glavina del Rio T."/>
            <person name="Hammon N."/>
            <person name="Israni S."/>
            <person name="Pitluck S."/>
            <person name="Chain P."/>
            <person name="Malfatti S."/>
            <person name="Shin M."/>
            <person name="Vergez L."/>
            <person name="Schmutz J."/>
            <person name="Larimer F."/>
            <person name="Land M."/>
            <person name="Hauser L."/>
            <person name="Kyrpides N."/>
            <person name="Kim E."/>
            <person name="Tomasz A."/>
            <person name="Richardson P."/>
        </authorList>
    </citation>
    <scope>NUCLEOTIDE SEQUENCE [LARGE SCALE GENOMIC DNA]</scope>
    <source>
        <strain>JH9</strain>
    </source>
</reference>
<sequence>MTDGPIKVNSEIGALKTVLLKRPGKELENLVPDYLDGLLFDDIPYLEVAQKEHDHFAQVLREEGVEVLYLEKLAAESIENPQVRSEFIDDVLAESKKTILGHEEEIKTLFATLSNQELVDKIMSGVRKEEINPKCTHLVEYMDDKYPFYLDPMPNLYFTRDPQASIGHGITINRMFWRARRRESIFIQYIVKHHPRFKDANIPIWLDRDCPFNIEGGDELVLSKDVLAIGVSERTSAQAIEKLARRIFENPQATFKKVVAIEIPTSRTFMHLDTVFTMIDYDKFTMHSAILKAEGNMNIFIIEYDDVNKDIAIKQSSHLKDTLEDVLGIDDIQFIPTGNGDVIDGAREQWNDGSNTLCIRPGVVVTYDRNYVSNDLLRQKGIKVIEISGSELVRGRGGPRCMSQPLFREDI</sequence>
<protein>
    <recommendedName>
        <fullName evidence="1">Arginine deiminase</fullName>
        <shortName evidence="1">ADI</shortName>
        <ecNumber evidence="1">3.5.3.6</ecNumber>
    </recommendedName>
    <alternativeName>
        <fullName evidence="1">Arginine dihydrolase</fullName>
        <shortName evidence="1">AD</shortName>
    </alternativeName>
</protein>
<proteinExistence type="inferred from homology"/>
<name>ARCA_STAA9</name>
<keyword id="KW-0056">Arginine metabolism</keyword>
<keyword id="KW-0963">Cytoplasm</keyword>
<keyword id="KW-0378">Hydrolase</keyword>
<organism>
    <name type="scientific">Staphylococcus aureus (strain JH9)</name>
    <dbReference type="NCBI Taxonomy" id="359786"/>
    <lineage>
        <taxon>Bacteria</taxon>
        <taxon>Bacillati</taxon>
        <taxon>Bacillota</taxon>
        <taxon>Bacilli</taxon>
        <taxon>Bacillales</taxon>
        <taxon>Staphylococcaceae</taxon>
        <taxon>Staphylococcus</taxon>
    </lineage>
</organism>